<sequence>MHLRRVRTMPRHSQSLTMAPYSSVSLVEQLEDRILCHEKTTAALVEHAFRIKDDIVSSLQKMQNKGGGDRLARLFLEEHIRNITAIVKQLNRDIEVLQEQIRARDNISYGTNSALKTLEMRQLSGLGDLRGRVARCDASIARLSAEHKTTYEGLQHLNKEQQAAKLILETKIKDAEGQISQLLNRVDLSISEQSTKLKMSHRDSNHQLQLLDTKFKGTVEELSNQILSARSWLQQEQERIEKELLQKIDHLSLIVKENSGASERDMEKKLTQMSARLDKIEESQRRNAEGQRKPEEEKVHGRISKLELQMTEDMKEMKAEVNAGFTAIYESIGSLRQVLEAKMKLDRDQLQKQIQQMQKPESSM</sequence>
<comment type="function">
    <text evidence="1">Facilitates the interaction and assembly of proteins within the postsynaptic density by promoting the condensation of postsynaptic proteins via liquid-liquid phase separation. Required for neuronal activity. Accumulation at the postsynaptic density results in enlargement of dendritic spines.</text>
</comment>
<comment type="subunit">
    <text evidence="1">Interacts with DLG4/PSD-95, GRIN2B/GLUN2B and SYNGAP1; the interactions facilitate condensate formation.</text>
</comment>
<comment type="subcellular location">
    <subcellularLocation>
        <location evidence="5">Postsynaptic density</location>
    </subcellularLocation>
    <subcellularLocation>
        <location evidence="2">Cytoplasm</location>
    </subcellularLocation>
</comment>
<comment type="tissue specificity">
    <text evidence="5">Highly expressed in brain (at protein level).</text>
</comment>
<comment type="developmental stage">
    <text evidence="5">In brain, expression increases with age, peaking in the adult (at protein level).</text>
</comment>
<comment type="similarity">
    <text evidence="6">Belongs to the FAM81 family.</text>
</comment>
<accession>D4A7T8</accession>
<accession>A6KEU1</accession>
<evidence type="ECO:0000250" key="1">
    <source>
        <dbReference type="UniProtKB" id="Q3UXZ6"/>
    </source>
</evidence>
<evidence type="ECO:0000250" key="2">
    <source>
        <dbReference type="UniProtKB" id="Q8TBF8"/>
    </source>
</evidence>
<evidence type="ECO:0000255" key="3"/>
<evidence type="ECO:0000256" key="4">
    <source>
        <dbReference type="SAM" id="MobiDB-lite"/>
    </source>
</evidence>
<evidence type="ECO:0000269" key="5">
    <source>
    </source>
</evidence>
<evidence type="ECO:0000305" key="6"/>
<evidence type="ECO:0000312" key="7">
    <source>
        <dbReference type="EMBL" id="EDL84192.1"/>
    </source>
</evidence>
<evidence type="ECO:0000312" key="8">
    <source>
        <dbReference type="Proteomes" id="UP000002494"/>
    </source>
</evidence>
<evidence type="ECO:0000312" key="9">
    <source>
        <dbReference type="RGD" id="1311958"/>
    </source>
</evidence>
<reference evidence="8" key="1">
    <citation type="journal article" date="2004" name="Nature">
        <title>Genome sequence of the Brown Norway rat yields insights into mammalian evolution.</title>
        <authorList>
            <person name="Gibbs R.A."/>
            <person name="Weinstock G.M."/>
            <person name="Metzker M.L."/>
            <person name="Muzny D.M."/>
            <person name="Sodergren E.J."/>
            <person name="Scherer S."/>
            <person name="Scott G."/>
            <person name="Steffen D."/>
            <person name="Worley K.C."/>
            <person name="Burch P.E."/>
            <person name="Okwuonu G."/>
            <person name="Hines S."/>
            <person name="Lewis L."/>
            <person name="Deramo C."/>
            <person name="Delgado O."/>
            <person name="Dugan-Rocha S."/>
            <person name="Miner G."/>
            <person name="Morgan M."/>
            <person name="Hawes A."/>
            <person name="Gill R."/>
            <person name="Holt R.A."/>
            <person name="Adams M.D."/>
            <person name="Amanatides P.G."/>
            <person name="Baden-Tillson H."/>
            <person name="Barnstead M."/>
            <person name="Chin S."/>
            <person name="Evans C.A."/>
            <person name="Ferriera S."/>
            <person name="Fosler C."/>
            <person name="Glodek A."/>
            <person name="Gu Z."/>
            <person name="Jennings D."/>
            <person name="Kraft C.L."/>
            <person name="Nguyen T."/>
            <person name="Pfannkoch C.M."/>
            <person name="Sitter C."/>
            <person name="Sutton G.G."/>
            <person name="Venter J.C."/>
            <person name="Woodage T."/>
            <person name="Smith D."/>
            <person name="Lee H.-M."/>
            <person name="Gustafson E."/>
            <person name="Cahill P."/>
            <person name="Kana A."/>
            <person name="Doucette-Stamm L."/>
            <person name="Weinstock K."/>
            <person name="Fechtel K."/>
            <person name="Weiss R.B."/>
            <person name="Dunn D.M."/>
            <person name="Green E.D."/>
            <person name="Blakesley R.W."/>
            <person name="Bouffard G.G."/>
            <person name="De Jong P.J."/>
            <person name="Osoegawa K."/>
            <person name="Zhu B."/>
            <person name="Marra M."/>
            <person name="Schein J."/>
            <person name="Bosdet I."/>
            <person name="Fjell C."/>
            <person name="Jones S."/>
            <person name="Krzywinski M."/>
            <person name="Mathewson C."/>
            <person name="Siddiqui A."/>
            <person name="Wye N."/>
            <person name="McPherson J."/>
            <person name="Zhao S."/>
            <person name="Fraser C.M."/>
            <person name="Shetty J."/>
            <person name="Shatsman S."/>
            <person name="Geer K."/>
            <person name="Chen Y."/>
            <person name="Abramzon S."/>
            <person name="Nierman W.C."/>
            <person name="Havlak P.H."/>
            <person name="Chen R."/>
            <person name="Durbin K.J."/>
            <person name="Egan A."/>
            <person name="Ren Y."/>
            <person name="Song X.-Z."/>
            <person name="Li B."/>
            <person name="Liu Y."/>
            <person name="Qin X."/>
            <person name="Cawley S."/>
            <person name="Cooney A.J."/>
            <person name="D'Souza L.M."/>
            <person name="Martin K."/>
            <person name="Wu J.Q."/>
            <person name="Gonzalez-Garay M.L."/>
            <person name="Jackson A.R."/>
            <person name="Kalafus K.J."/>
            <person name="McLeod M.P."/>
            <person name="Milosavljevic A."/>
            <person name="Virk D."/>
            <person name="Volkov A."/>
            <person name="Wheeler D.A."/>
            <person name="Zhang Z."/>
            <person name="Bailey J.A."/>
            <person name="Eichler E.E."/>
            <person name="Tuzun E."/>
            <person name="Birney E."/>
            <person name="Mongin E."/>
            <person name="Ureta-Vidal A."/>
            <person name="Woodwark C."/>
            <person name="Zdobnov E."/>
            <person name="Bork P."/>
            <person name="Suyama M."/>
            <person name="Torrents D."/>
            <person name="Alexandersson M."/>
            <person name="Trask B.J."/>
            <person name="Young J.M."/>
            <person name="Huang H."/>
            <person name="Wang H."/>
            <person name="Xing H."/>
            <person name="Daniels S."/>
            <person name="Gietzen D."/>
            <person name="Schmidt J."/>
            <person name="Stevens K."/>
            <person name="Vitt U."/>
            <person name="Wingrove J."/>
            <person name="Camara F."/>
            <person name="Mar Alba M."/>
            <person name="Abril J.F."/>
            <person name="Guigo R."/>
            <person name="Smit A."/>
            <person name="Dubchak I."/>
            <person name="Rubin E.M."/>
            <person name="Couronne O."/>
            <person name="Poliakov A."/>
            <person name="Huebner N."/>
            <person name="Ganten D."/>
            <person name="Goesele C."/>
            <person name="Hummel O."/>
            <person name="Kreitler T."/>
            <person name="Lee Y.-A."/>
            <person name="Monti J."/>
            <person name="Schulz H."/>
            <person name="Zimdahl H."/>
            <person name="Himmelbauer H."/>
            <person name="Lehrach H."/>
            <person name="Jacob H.J."/>
            <person name="Bromberg S."/>
            <person name="Gullings-Handley J."/>
            <person name="Jensen-Seaman M.I."/>
            <person name="Kwitek A.E."/>
            <person name="Lazar J."/>
            <person name="Pasko D."/>
            <person name="Tonellato P.J."/>
            <person name="Twigger S."/>
            <person name="Ponting C.P."/>
            <person name="Duarte J.M."/>
            <person name="Rice S."/>
            <person name="Goodstadt L."/>
            <person name="Beatson S.A."/>
            <person name="Emes R.D."/>
            <person name="Winter E.E."/>
            <person name="Webber C."/>
            <person name="Brandt P."/>
            <person name="Nyakatura G."/>
            <person name="Adetobi M."/>
            <person name="Chiaromonte F."/>
            <person name="Elnitski L."/>
            <person name="Eswara P."/>
            <person name="Hardison R.C."/>
            <person name="Hou M."/>
            <person name="Kolbe D."/>
            <person name="Makova K."/>
            <person name="Miller W."/>
            <person name="Nekrutenko A."/>
            <person name="Riemer C."/>
            <person name="Schwartz S."/>
            <person name="Taylor J."/>
            <person name="Yang S."/>
            <person name="Zhang Y."/>
            <person name="Lindpaintner K."/>
            <person name="Andrews T.D."/>
            <person name="Caccamo M."/>
            <person name="Clamp M."/>
            <person name="Clarke L."/>
            <person name="Curwen V."/>
            <person name="Durbin R.M."/>
            <person name="Eyras E."/>
            <person name="Searle S.M."/>
            <person name="Cooper G.M."/>
            <person name="Batzoglou S."/>
            <person name="Brudno M."/>
            <person name="Sidow A."/>
            <person name="Stone E.A."/>
            <person name="Payseur B.A."/>
            <person name="Bourque G."/>
            <person name="Lopez-Otin C."/>
            <person name="Puente X.S."/>
            <person name="Chakrabarti K."/>
            <person name="Chatterji S."/>
            <person name="Dewey C."/>
            <person name="Pachter L."/>
            <person name="Bray N."/>
            <person name="Yap V.B."/>
            <person name="Caspi A."/>
            <person name="Tesler G."/>
            <person name="Pevzner P.A."/>
            <person name="Haussler D."/>
            <person name="Roskin K.M."/>
            <person name="Baertsch R."/>
            <person name="Clawson H."/>
            <person name="Furey T.S."/>
            <person name="Hinrichs A.S."/>
            <person name="Karolchik D."/>
            <person name="Kent W.J."/>
            <person name="Rosenbloom K.R."/>
            <person name="Trumbower H."/>
            <person name="Weirauch M."/>
            <person name="Cooper D.N."/>
            <person name="Stenson P.D."/>
            <person name="Ma B."/>
            <person name="Brent M."/>
            <person name="Arumugam M."/>
            <person name="Shteynberg D."/>
            <person name="Copley R.R."/>
            <person name="Taylor M.S."/>
            <person name="Riethman H."/>
            <person name="Mudunuri U."/>
            <person name="Peterson J."/>
            <person name="Guyer M."/>
            <person name="Felsenfeld A."/>
            <person name="Old S."/>
            <person name="Mockrin S."/>
            <person name="Collins F.S."/>
        </authorList>
    </citation>
    <scope>NUCLEOTIDE SEQUENCE [LARGE SCALE GENOMIC DNA]</scope>
    <source>
        <strain evidence="8">Brown Norway</strain>
    </source>
</reference>
<reference evidence="7" key="2">
    <citation type="submission" date="2005-07" db="EMBL/GenBank/DDBJ databases">
        <authorList>
            <person name="Mural R.J."/>
            <person name="Adams M.D."/>
            <person name="Myers E.W."/>
            <person name="Smith H.O."/>
            <person name="Venter J.C."/>
        </authorList>
    </citation>
    <scope>NUCLEOTIDE SEQUENCE [LARGE SCALE GENOMIC DNA]</scope>
</reference>
<reference evidence="6" key="3">
    <citation type="journal article" date="2019" name="Neurosci. Lett.">
        <title>FAM81A protein, a novel component of the postsynaptic density in adult brain.</title>
        <authorList>
            <person name="Dosemeci A."/>
            <person name="Loo H.K."/>
            <person name="Toy D."/>
            <person name="Winters C.A."/>
            <person name="Reese T.S."/>
            <person name="Tao-Cheng J.H."/>
        </authorList>
    </citation>
    <scope>SUBCELLULAR LOCATION</scope>
    <scope>TISSUE SPECIFICITY</scope>
    <scope>DEVELOPMENTAL STAGE</scope>
</reference>
<name>FA81A_RAT</name>
<organism evidence="8">
    <name type="scientific">Rattus norvegicus</name>
    <name type="common">Rat</name>
    <dbReference type="NCBI Taxonomy" id="10116"/>
    <lineage>
        <taxon>Eukaryota</taxon>
        <taxon>Metazoa</taxon>
        <taxon>Chordata</taxon>
        <taxon>Craniata</taxon>
        <taxon>Vertebrata</taxon>
        <taxon>Euteleostomi</taxon>
        <taxon>Mammalia</taxon>
        <taxon>Eutheria</taxon>
        <taxon>Euarchontoglires</taxon>
        <taxon>Glires</taxon>
        <taxon>Rodentia</taxon>
        <taxon>Myomorpha</taxon>
        <taxon>Muroidea</taxon>
        <taxon>Muridae</taxon>
        <taxon>Murinae</taxon>
        <taxon>Rattus</taxon>
    </lineage>
</organism>
<gene>
    <name evidence="9" type="primary">Fam81a</name>
</gene>
<feature type="chain" id="PRO_0000460929" description="Protein FAM81A">
    <location>
        <begin position="1"/>
        <end position="364"/>
    </location>
</feature>
<feature type="region of interest" description="Disordered" evidence="4">
    <location>
        <begin position="275"/>
        <end position="301"/>
    </location>
</feature>
<feature type="coiled-coil region" evidence="3">
    <location>
        <begin position="80"/>
        <end position="107"/>
    </location>
</feature>
<feature type="compositionally biased region" description="Basic and acidic residues" evidence="4">
    <location>
        <begin position="275"/>
        <end position="300"/>
    </location>
</feature>
<dbReference type="EMBL" id="CH474041">
    <property type="protein sequence ID" value="EDL84192.1"/>
    <property type="molecule type" value="Genomic_DNA"/>
</dbReference>
<dbReference type="RefSeq" id="NP_001101633.1">
    <property type="nucleotide sequence ID" value="NM_001108163.2"/>
</dbReference>
<dbReference type="RefSeq" id="NP_001420677.1">
    <property type="nucleotide sequence ID" value="NM_001433748.1"/>
</dbReference>
<dbReference type="RefSeq" id="XP_006243440.1">
    <property type="nucleotide sequence ID" value="XM_006243378.3"/>
</dbReference>
<dbReference type="RefSeq" id="XP_006243441.1">
    <property type="nucleotide sequence ID" value="XM_006243379.3"/>
</dbReference>
<dbReference type="SMR" id="D4A7T8"/>
<dbReference type="FunCoup" id="D4A7T8">
    <property type="interactions" value="618"/>
</dbReference>
<dbReference type="STRING" id="10116.ENSRNOP00000075059"/>
<dbReference type="PhosphoSitePlus" id="D4A7T8"/>
<dbReference type="PaxDb" id="10116-ENSRNOP00000014812"/>
<dbReference type="Ensembl" id="ENSRNOT00000090747.2">
    <property type="protein sequence ID" value="ENSRNOP00000071796.1"/>
    <property type="gene ID" value="ENSRNOG00000057501.2"/>
</dbReference>
<dbReference type="Ensembl" id="ENSRNOT00055011717">
    <property type="protein sequence ID" value="ENSRNOP00055009246"/>
    <property type="gene ID" value="ENSRNOG00055007082"/>
</dbReference>
<dbReference type="Ensembl" id="ENSRNOT00060029543">
    <property type="protein sequence ID" value="ENSRNOP00060023761"/>
    <property type="gene ID" value="ENSRNOG00060017303"/>
</dbReference>
<dbReference type="GeneID" id="315789"/>
<dbReference type="KEGG" id="rno:315789"/>
<dbReference type="UCSC" id="RGD:1311958">
    <property type="organism name" value="rat"/>
</dbReference>
<dbReference type="AGR" id="RGD:1311958"/>
<dbReference type="CTD" id="145773"/>
<dbReference type="RGD" id="1311958">
    <property type="gene designation" value="Fam81a"/>
</dbReference>
<dbReference type="eggNOG" id="ENOG502S0X8">
    <property type="taxonomic scope" value="Eukaryota"/>
</dbReference>
<dbReference type="GeneTree" id="ENSGT00390000004985"/>
<dbReference type="HOGENOM" id="CLU_056304_1_0_1"/>
<dbReference type="OMA" id="MQKITME"/>
<dbReference type="OrthoDB" id="10014002at2759"/>
<dbReference type="Proteomes" id="UP000002494">
    <property type="component" value="Chromosome 8"/>
</dbReference>
<dbReference type="Proteomes" id="UP000234681">
    <property type="component" value="Chromosome 8"/>
</dbReference>
<dbReference type="Bgee" id="ENSRNOG00000057501">
    <property type="expression patterns" value="Expressed in frontal cortex and 13 other cell types or tissues"/>
</dbReference>
<dbReference type="GO" id="GO:0005737">
    <property type="term" value="C:cytoplasm"/>
    <property type="evidence" value="ECO:0000250"/>
    <property type="project" value="UniProtKB"/>
</dbReference>
<dbReference type="GO" id="GO:0098978">
    <property type="term" value="C:glutamatergic synapse"/>
    <property type="evidence" value="ECO:0000314"/>
    <property type="project" value="SynGO"/>
</dbReference>
<dbReference type="GO" id="GO:0014069">
    <property type="term" value="C:postsynaptic density"/>
    <property type="evidence" value="ECO:0000314"/>
    <property type="project" value="UniProtKB"/>
</dbReference>
<dbReference type="GO" id="GO:0099092">
    <property type="term" value="C:postsynaptic density, intracellular component"/>
    <property type="evidence" value="ECO:0000314"/>
    <property type="project" value="SynGO"/>
</dbReference>
<dbReference type="GO" id="GO:0140693">
    <property type="term" value="F:molecular condensate scaffold activity"/>
    <property type="evidence" value="ECO:0000250"/>
    <property type="project" value="UniProtKB"/>
</dbReference>
<dbReference type="InterPro" id="IPR029619">
    <property type="entry name" value="FAM81"/>
</dbReference>
<dbReference type="PANTHER" id="PTHR22420">
    <property type="entry name" value="PROTEIN FAM81A"/>
    <property type="match status" value="1"/>
</dbReference>
<dbReference type="PANTHER" id="PTHR22420:SF2">
    <property type="entry name" value="PROTEIN FAM81A"/>
    <property type="match status" value="1"/>
</dbReference>
<proteinExistence type="evidence at protein level"/>
<protein>
    <recommendedName>
        <fullName evidence="6">Protein FAM81A</fullName>
    </recommendedName>
</protein>
<keyword id="KW-0175">Coiled coil</keyword>
<keyword id="KW-0963">Cytoplasm</keyword>
<keyword id="KW-1185">Reference proteome</keyword>
<keyword id="KW-0770">Synapse</keyword>